<comment type="function">
    <text evidence="1">Forms part of the ribosomal stalk, playing a central role in the interaction of the ribosome with GTP-bound translation factors.</text>
</comment>
<comment type="subunit">
    <text evidence="1">Part of the ribosomal stalk of the 50S ribosomal subunit. The N-terminus interacts with L11 and the large rRNA to form the base of the stalk. The C-terminus forms an elongated spine to which L12 dimers bind in a sequential fashion forming a multimeric L10(L12)X complex.</text>
</comment>
<comment type="similarity">
    <text evidence="1">Belongs to the universal ribosomal protein uL10 family.</text>
</comment>
<dbReference type="EMBL" id="AE017245">
    <property type="protein sequence ID" value="AAZ43832.1"/>
    <property type="molecule type" value="Genomic_DNA"/>
</dbReference>
<dbReference type="RefSeq" id="WP_011283563.1">
    <property type="nucleotide sequence ID" value="NC_007294.1"/>
</dbReference>
<dbReference type="SMR" id="Q4A5Y9"/>
<dbReference type="STRING" id="262723.MS53_0420"/>
<dbReference type="GeneID" id="93530203"/>
<dbReference type="KEGG" id="msy:MS53_0420"/>
<dbReference type="eggNOG" id="COG0244">
    <property type="taxonomic scope" value="Bacteria"/>
</dbReference>
<dbReference type="HOGENOM" id="CLU_092227_2_0_14"/>
<dbReference type="OrthoDB" id="9808307at2"/>
<dbReference type="Proteomes" id="UP000000549">
    <property type="component" value="Chromosome"/>
</dbReference>
<dbReference type="GO" id="GO:1990904">
    <property type="term" value="C:ribonucleoprotein complex"/>
    <property type="evidence" value="ECO:0007669"/>
    <property type="project" value="UniProtKB-KW"/>
</dbReference>
<dbReference type="GO" id="GO:0005840">
    <property type="term" value="C:ribosome"/>
    <property type="evidence" value="ECO:0007669"/>
    <property type="project" value="UniProtKB-KW"/>
</dbReference>
<dbReference type="GO" id="GO:0070180">
    <property type="term" value="F:large ribosomal subunit rRNA binding"/>
    <property type="evidence" value="ECO:0007669"/>
    <property type="project" value="UniProtKB-UniRule"/>
</dbReference>
<dbReference type="GO" id="GO:0006412">
    <property type="term" value="P:translation"/>
    <property type="evidence" value="ECO:0007669"/>
    <property type="project" value="UniProtKB-UniRule"/>
</dbReference>
<dbReference type="CDD" id="cd05797">
    <property type="entry name" value="Ribosomal_L10"/>
    <property type="match status" value="1"/>
</dbReference>
<dbReference type="Gene3D" id="3.30.70.1730">
    <property type="match status" value="1"/>
</dbReference>
<dbReference type="HAMAP" id="MF_00362">
    <property type="entry name" value="Ribosomal_uL10"/>
    <property type="match status" value="1"/>
</dbReference>
<dbReference type="InterPro" id="IPR001790">
    <property type="entry name" value="Ribosomal_uL10"/>
</dbReference>
<dbReference type="InterPro" id="IPR043141">
    <property type="entry name" value="Ribosomal_uL10-like_sf"/>
</dbReference>
<dbReference type="InterPro" id="IPR022973">
    <property type="entry name" value="Ribosomal_uL10_bac"/>
</dbReference>
<dbReference type="InterPro" id="IPR047865">
    <property type="entry name" value="Ribosomal_uL10_bac_type"/>
</dbReference>
<dbReference type="NCBIfam" id="NF000955">
    <property type="entry name" value="PRK00099.1-1"/>
    <property type="match status" value="1"/>
</dbReference>
<dbReference type="PANTHER" id="PTHR11560">
    <property type="entry name" value="39S RIBOSOMAL PROTEIN L10, MITOCHONDRIAL"/>
    <property type="match status" value="1"/>
</dbReference>
<dbReference type="Pfam" id="PF00466">
    <property type="entry name" value="Ribosomal_L10"/>
    <property type="match status" value="1"/>
</dbReference>
<dbReference type="SUPFAM" id="SSF160369">
    <property type="entry name" value="Ribosomal protein L10-like"/>
    <property type="match status" value="1"/>
</dbReference>
<accession>Q4A5Y9</accession>
<name>RL10_MYCS5</name>
<sequence length="165" mass="18188">MKESSLKLAKKVTVSEITNKISSAKAIAFAEYRGLTVAQLKEMRVEAKKVGVELKVYKNRLFKLATDKLGYDLSSFLVGANIFAFSNDDDMSAAKLLVKFAKKHKEFVVLKAGTFEGKVVDTQELKKVAALPSYEEALTILARSLMAPLQQLSLGLKLVSEQKSN</sequence>
<keyword id="KW-1185">Reference proteome</keyword>
<keyword id="KW-0687">Ribonucleoprotein</keyword>
<keyword id="KW-0689">Ribosomal protein</keyword>
<keyword id="KW-0694">RNA-binding</keyword>
<keyword id="KW-0699">rRNA-binding</keyword>
<feature type="chain" id="PRO_0000234861" description="Large ribosomal subunit protein uL10">
    <location>
        <begin position="1"/>
        <end position="165"/>
    </location>
</feature>
<evidence type="ECO:0000255" key="1">
    <source>
        <dbReference type="HAMAP-Rule" id="MF_00362"/>
    </source>
</evidence>
<evidence type="ECO:0000305" key="2"/>
<protein>
    <recommendedName>
        <fullName evidence="1">Large ribosomal subunit protein uL10</fullName>
    </recommendedName>
    <alternativeName>
        <fullName evidence="2">50S ribosomal protein L10</fullName>
    </alternativeName>
</protein>
<organism>
    <name type="scientific">Mycoplasmopsis synoviae (strain 53)</name>
    <name type="common">Mycoplasma synoviae</name>
    <dbReference type="NCBI Taxonomy" id="262723"/>
    <lineage>
        <taxon>Bacteria</taxon>
        <taxon>Bacillati</taxon>
        <taxon>Mycoplasmatota</taxon>
        <taxon>Mycoplasmoidales</taxon>
        <taxon>Metamycoplasmataceae</taxon>
        <taxon>Mycoplasmopsis</taxon>
    </lineage>
</organism>
<proteinExistence type="inferred from homology"/>
<gene>
    <name evidence="1" type="primary">rplJ</name>
    <name type="ordered locus">MS53_0420</name>
</gene>
<reference key="1">
    <citation type="journal article" date="2005" name="J. Bacteriol.">
        <title>Swine and poultry pathogens: the complete genome sequences of two strains of Mycoplasma hyopneumoniae and a strain of Mycoplasma synoviae.</title>
        <authorList>
            <person name="Vasconcelos A.T.R."/>
            <person name="Ferreira H.B."/>
            <person name="Bizarro C.V."/>
            <person name="Bonatto S.L."/>
            <person name="Carvalho M.O."/>
            <person name="Pinto P.M."/>
            <person name="Almeida D.F."/>
            <person name="Almeida L.G.P."/>
            <person name="Almeida R."/>
            <person name="Alves-Junior L."/>
            <person name="Assuncao E.N."/>
            <person name="Azevedo V.A.C."/>
            <person name="Bogo M.R."/>
            <person name="Brigido M.M."/>
            <person name="Brocchi M."/>
            <person name="Burity H.A."/>
            <person name="Camargo A.A."/>
            <person name="Camargo S.S."/>
            <person name="Carepo M.S."/>
            <person name="Carraro D.M."/>
            <person name="de Mattos Cascardo J.C."/>
            <person name="Castro L.A."/>
            <person name="Cavalcanti G."/>
            <person name="Chemale G."/>
            <person name="Collevatti R.G."/>
            <person name="Cunha C.W."/>
            <person name="Dallagiovanna B."/>
            <person name="Dambros B.P."/>
            <person name="Dellagostin O.A."/>
            <person name="Falcao C."/>
            <person name="Fantinatti-Garboggini F."/>
            <person name="Felipe M.S.S."/>
            <person name="Fiorentin L."/>
            <person name="Franco G.R."/>
            <person name="Freitas N.S.A."/>
            <person name="Frias D."/>
            <person name="Grangeiro T.B."/>
            <person name="Grisard E.C."/>
            <person name="Guimaraes C.T."/>
            <person name="Hungria M."/>
            <person name="Jardim S.N."/>
            <person name="Krieger M.A."/>
            <person name="Laurino J.P."/>
            <person name="Lima L.F.A."/>
            <person name="Lopes M.I."/>
            <person name="Loreto E.L.S."/>
            <person name="Madeira H.M.F."/>
            <person name="Manfio G.P."/>
            <person name="Maranhao A.Q."/>
            <person name="Martinkovics C.T."/>
            <person name="Medeiros S.R.B."/>
            <person name="Moreira M.A.M."/>
            <person name="Neiva M."/>
            <person name="Ramalho-Neto C.E."/>
            <person name="Nicolas M.F."/>
            <person name="Oliveira S.C."/>
            <person name="Paixao R.F.C."/>
            <person name="Pedrosa F.O."/>
            <person name="Pena S.D.J."/>
            <person name="Pereira M."/>
            <person name="Pereira-Ferrari L."/>
            <person name="Piffer I."/>
            <person name="Pinto L.S."/>
            <person name="Potrich D.P."/>
            <person name="Salim A.C.M."/>
            <person name="Santos F.R."/>
            <person name="Schmitt R."/>
            <person name="Schneider M.P.C."/>
            <person name="Schrank A."/>
            <person name="Schrank I.S."/>
            <person name="Schuck A.F."/>
            <person name="Seuanez H.N."/>
            <person name="Silva D.W."/>
            <person name="Silva R."/>
            <person name="Silva S.C."/>
            <person name="Soares C.M.A."/>
            <person name="Souza K.R.L."/>
            <person name="Souza R.C."/>
            <person name="Staats C.C."/>
            <person name="Steffens M.B.R."/>
            <person name="Teixeira S.M.R."/>
            <person name="Urmenyi T.P."/>
            <person name="Vainstein M.H."/>
            <person name="Zuccherato L.W."/>
            <person name="Simpson A.J.G."/>
            <person name="Zaha A."/>
        </authorList>
    </citation>
    <scope>NUCLEOTIDE SEQUENCE [LARGE SCALE GENOMIC DNA]</scope>
    <source>
        <strain>53</strain>
    </source>
</reference>